<dbReference type="EMBL" id="CP001233">
    <property type="protein sequence ID" value="ACP06874.1"/>
    <property type="molecule type" value="Genomic_DNA"/>
</dbReference>
<dbReference type="RefSeq" id="WP_000071094.1">
    <property type="nucleotide sequence ID" value="NC_012578.1"/>
</dbReference>
<dbReference type="SMR" id="C3LS87"/>
<dbReference type="GeneID" id="88785213"/>
<dbReference type="KEGG" id="vcm:VCM66_2578"/>
<dbReference type="HOGENOM" id="CLU_156492_0_0_6"/>
<dbReference type="Proteomes" id="UP000001217">
    <property type="component" value="Chromosome I"/>
</dbReference>
<dbReference type="GO" id="GO:0045283">
    <property type="term" value="C:fumarate reductase complex"/>
    <property type="evidence" value="ECO:0007669"/>
    <property type="project" value="UniProtKB-UniRule"/>
</dbReference>
<dbReference type="GO" id="GO:0005886">
    <property type="term" value="C:plasma membrane"/>
    <property type="evidence" value="ECO:0007669"/>
    <property type="project" value="UniProtKB-SubCell"/>
</dbReference>
<dbReference type="GO" id="GO:0000104">
    <property type="term" value="F:succinate dehydrogenase activity"/>
    <property type="evidence" value="ECO:0007669"/>
    <property type="project" value="UniProtKB-UniRule"/>
</dbReference>
<dbReference type="CDD" id="cd00546">
    <property type="entry name" value="QFR_TypeD_subunitC"/>
    <property type="match status" value="1"/>
</dbReference>
<dbReference type="FunFam" id="1.20.1300.10:FF:000018">
    <property type="entry name" value="Fumarate reductase subunit C"/>
    <property type="match status" value="1"/>
</dbReference>
<dbReference type="Gene3D" id="1.20.1300.10">
    <property type="entry name" value="Fumarate reductase/succinate dehydrogenase, transmembrane subunit"/>
    <property type="match status" value="1"/>
</dbReference>
<dbReference type="HAMAP" id="MF_00708">
    <property type="entry name" value="Fumarate_red_C"/>
    <property type="match status" value="1"/>
</dbReference>
<dbReference type="InterPro" id="IPR003510">
    <property type="entry name" value="Fumarate_red_C"/>
</dbReference>
<dbReference type="InterPro" id="IPR034804">
    <property type="entry name" value="SQR/QFR_C/D"/>
</dbReference>
<dbReference type="NCBIfam" id="NF003445">
    <property type="entry name" value="PRK04987.1"/>
    <property type="match status" value="1"/>
</dbReference>
<dbReference type="Pfam" id="PF02300">
    <property type="entry name" value="Fumarate_red_C"/>
    <property type="match status" value="1"/>
</dbReference>
<dbReference type="PIRSF" id="PIRSF000180">
    <property type="entry name" value="FrdC"/>
    <property type="match status" value="1"/>
</dbReference>
<dbReference type="SUPFAM" id="SSF81343">
    <property type="entry name" value="Fumarate reductase respiratory complex transmembrane subunits"/>
    <property type="match status" value="1"/>
</dbReference>
<keyword id="KW-0997">Cell inner membrane</keyword>
<keyword id="KW-1003">Cell membrane</keyword>
<keyword id="KW-0472">Membrane</keyword>
<keyword id="KW-0812">Transmembrane</keyword>
<keyword id="KW-1133">Transmembrane helix</keyword>
<sequence>MSNRKPYVREMKRTWWKDHPFYRFYMVREATVLPLILFTLFLTVGLGSLVKGPEAWQTWLDFMANPLVIAINLVALAGSLFHAQTFFSMMPQVVPIRLGGKLVDKKIIVLAQWAAVAFISLIVLIVV</sequence>
<comment type="function">
    <text evidence="1">Anchors the catalytic components of the fumarate reductase complex to the cell membrane, binds quinones.</text>
</comment>
<comment type="subunit">
    <text evidence="1">Part of an enzyme complex containing four subunits: a flavoprotein (FrdA), an iron-sulfur protein (FrdB), and two hydrophobic anchor proteins (FrdC and FrdD).</text>
</comment>
<comment type="subcellular location">
    <subcellularLocation>
        <location evidence="1">Cell inner membrane</location>
        <topology evidence="1">Multi-pass membrane protein</topology>
    </subcellularLocation>
</comment>
<comment type="similarity">
    <text evidence="1">Belongs to the FrdC family.</text>
</comment>
<protein>
    <recommendedName>
        <fullName evidence="1">Fumarate reductase subunit C</fullName>
    </recommendedName>
    <alternativeName>
        <fullName evidence="1">Quinol-fumarate reductase subunit C</fullName>
        <shortName evidence="1">QFR subunit C</shortName>
    </alternativeName>
</protein>
<reference key="1">
    <citation type="journal article" date="2008" name="PLoS ONE">
        <title>A recalibrated molecular clock and independent origins for the cholera pandemic clones.</title>
        <authorList>
            <person name="Feng L."/>
            <person name="Reeves P.R."/>
            <person name="Lan R."/>
            <person name="Ren Y."/>
            <person name="Gao C."/>
            <person name="Zhou Z."/>
            <person name="Ren Y."/>
            <person name="Cheng J."/>
            <person name="Wang W."/>
            <person name="Wang J."/>
            <person name="Qian W."/>
            <person name="Li D."/>
            <person name="Wang L."/>
        </authorList>
    </citation>
    <scope>NUCLEOTIDE SEQUENCE [LARGE SCALE GENOMIC DNA]</scope>
    <source>
        <strain>M66-2</strain>
    </source>
</reference>
<name>FRDC_VIBCM</name>
<evidence type="ECO:0000255" key="1">
    <source>
        <dbReference type="HAMAP-Rule" id="MF_00708"/>
    </source>
</evidence>
<gene>
    <name evidence="1" type="primary">frdC</name>
    <name type="ordered locus">VCM66_2578</name>
</gene>
<proteinExistence type="inferred from homology"/>
<accession>C3LS87</accession>
<organism>
    <name type="scientific">Vibrio cholerae serotype O1 (strain M66-2)</name>
    <dbReference type="NCBI Taxonomy" id="579112"/>
    <lineage>
        <taxon>Bacteria</taxon>
        <taxon>Pseudomonadati</taxon>
        <taxon>Pseudomonadota</taxon>
        <taxon>Gammaproteobacteria</taxon>
        <taxon>Vibrionales</taxon>
        <taxon>Vibrionaceae</taxon>
        <taxon>Vibrio</taxon>
    </lineage>
</organism>
<feature type="chain" id="PRO_1000147952" description="Fumarate reductase subunit C">
    <location>
        <begin position="1"/>
        <end position="127"/>
    </location>
</feature>
<feature type="transmembrane region" description="Helical" evidence="1">
    <location>
        <begin position="30"/>
        <end position="50"/>
    </location>
</feature>
<feature type="transmembrane region" description="Helical" evidence="1">
    <location>
        <begin position="67"/>
        <end position="87"/>
    </location>
</feature>
<feature type="transmembrane region" description="Helical" evidence="1">
    <location>
        <begin position="107"/>
        <end position="127"/>
    </location>
</feature>